<gene>
    <name evidence="1" type="primary">dnaK</name>
    <name type="ordered locus">PFL_0827</name>
</gene>
<comment type="function">
    <text evidence="1">Acts as a chaperone.</text>
</comment>
<comment type="induction">
    <text evidence="1">By stress conditions e.g. heat shock.</text>
</comment>
<comment type="similarity">
    <text evidence="1">Belongs to the heat shock protein 70 family.</text>
</comment>
<feature type="chain" id="PRO_0000225996" description="Chaperone protein DnaK">
    <location>
        <begin position="1"/>
        <end position="638"/>
    </location>
</feature>
<feature type="region of interest" description="Disordered" evidence="2">
    <location>
        <begin position="605"/>
        <end position="638"/>
    </location>
</feature>
<feature type="compositionally biased region" description="Low complexity" evidence="2">
    <location>
        <begin position="605"/>
        <end position="617"/>
    </location>
</feature>
<feature type="modified residue" description="Phosphothreonine; by autocatalysis" evidence="1">
    <location>
        <position position="199"/>
    </location>
</feature>
<dbReference type="EMBL" id="CP000076">
    <property type="protein sequence ID" value="AAY96227.1"/>
    <property type="molecule type" value="Genomic_DNA"/>
</dbReference>
<dbReference type="RefSeq" id="WP_011059188.1">
    <property type="nucleotide sequence ID" value="NC_004129.6"/>
</dbReference>
<dbReference type="SMR" id="Q4KIH1"/>
<dbReference type="STRING" id="220664.PFL_0827"/>
<dbReference type="GeneID" id="57473827"/>
<dbReference type="KEGG" id="pfl:PFL_0827"/>
<dbReference type="PATRIC" id="fig|220664.5.peg.848"/>
<dbReference type="eggNOG" id="COG0443">
    <property type="taxonomic scope" value="Bacteria"/>
</dbReference>
<dbReference type="HOGENOM" id="CLU_005965_2_1_6"/>
<dbReference type="Proteomes" id="UP000008540">
    <property type="component" value="Chromosome"/>
</dbReference>
<dbReference type="GO" id="GO:0005524">
    <property type="term" value="F:ATP binding"/>
    <property type="evidence" value="ECO:0007669"/>
    <property type="project" value="UniProtKB-UniRule"/>
</dbReference>
<dbReference type="GO" id="GO:0140662">
    <property type="term" value="F:ATP-dependent protein folding chaperone"/>
    <property type="evidence" value="ECO:0007669"/>
    <property type="project" value="InterPro"/>
</dbReference>
<dbReference type="GO" id="GO:0051082">
    <property type="term" value="F:unfolded protein binding"/>
    <property type="evidence" value="ECO:0007669"/>
    <property type="project" value="InterPro"/>
</dbReference>
<dbReference type="CDD" id="cd10234">
    <property type="entry name" value="ASKHA_NBD_HSP70_DnaK-like"/>
    <property type="match status" value="1"/>
</dbReference>
<dbReference type="FunFam" id="2.60.34.10:FF:000014">
    <property type="entry name" value="Chaperone protein DnaK HSP70"/>
    <property type="match status" value="1"/>
</dbReference>
<dbReference type="FunFam" id="3.30.30.30:FF:000003">
    <property type="entry name" value="Heat shock protein 9"/>
    <property type="match status" value="1"/>
</dbReference>
<dbReference type="FunFam" id="1.20.1270.10:FF:000001">
    <property type="entry name" value="Molecular chaperone DnaK"/>
    <property type="match status" value="1"/>
</dbReference>
<dbReference type="FunFam" id="3.30.420.40:FF:000004">
    <property type="entry name" value="Molecular chaperone DnaK"/>
    <property type="match status" value="1"/>
</dbReference>
<dbReference type="FunFam" id="3.90.640.10:FF:000003">
    <property type="entry name" value="Molecular chaperone DnaK"/>
    <property type="match status" value="1"/>
</dbReference>
<dbReference type="Gene3D" id="1.20.1270.10">
    <property type="match status" value="1"/>
</dbReference>
<dbReference type="Gene3D" id="3.30.420.40">
    <property type="match status" value="2"/>
</dbReference>
<dbReference type="Gene3D" id="3.90.640.10">
    <property type="entry name" value="Actin, Chain A, domain 4"/>
    <property type="match status" value="1"/>
</dbReference>
<dbReference type="Gene3D" id="2.60.34.10">
    <property type="entry name" value="Substrate Binding Domain Of DNAk, Chain A, domain 1"/>
    <property type="match status" value="1"/>
</dbReference>
<dbReference type="HAMAP" id="MF_00332">
    <property type="entry name" value="DnaK"/>
    <property type="match status" value="1"/>
</dbReference>
<dbReference type="InterPro" id="IPR043129">
    <property type="entry name" value="ATPase_NBD"/>
</dbReference>
<dbReference type="InterPro" id="IPR012725">
    <property type="entry name" value="Chaperone_DnaK"/>
</dbReference>
<dbReference type="InterPro" id="IPR018181">
    <property type="entry name" value="Heat_shock_70_CS"/>
</dbReference>
<dbReference type="InterPro" id="IPR029048">
    <property type="entry name" value="HSP70_C_sf"/>
</dbReference>
<dbReference type="InterPro" id="IPR029047">
    <property type="entry name" value="HSP70_peptide-bd_sf"/>
</dbReference>
<dbReference type="InterPro" id="IPR013126">
    <property type="entry name" value="Hsp_70_fam"/>
</dbReference>
<dbReference type="NCBIfam" id="NF001413">
    <property type="entry name" value="PRK00290.1"/>
    <property type="match status" value="1"/>
</dbReference>
<dbReference type="NCBIfam" id="TIGR02350">
    <property type="entry name" value="prok_dnaK"/>
    <property type="match status" value="1"/>
</dbReference>
<dbReference type="PANTHER" id="PTHR19375">
    <property type="entry name" value="HEAT SHOCK PROTEIN 70KDA"/>
    <property type="match status" value="1"/>
</dbReference>
<dbReference type="Pfam" id="PF00012">
    <property type="entry name" value="HSP70"/>
    <property type="match status" value="1"/>
</dbReference>
<dbReference type="PRINTS" id="PR00301">
    <property type="entry name" value="HEATSHOCK70"/>
</dbReference>
<dbReference type="SUPFAM" id="SSF53067">
    <property type="entry name" value="Actin-like ATPase domain"/>
    <property type="match status" value="2"/>
</dbReference>
<dbReference type="SUPFAM" id="SSF100934">
    <property type="entry name" value="Heat shock protein 70kD (HSP70), C-terminal subdomain"/>
    <property type="match status" value="1"/>
</dbReference>
<dbReference type="SUPFAM" id="SSF100920">
    <property type="entry name" value="Heat shock protein 70kD (HSP70), peptide-binding domain"/>
    <property type="match status" value="1"/>
</dbReference>
<dbReference type="PROSITE" id="PS00297">
    <property type="entry name" value="HSP70_1"/>
    <property type="match status" value="1"/>
</dbReference>
<dbReference type="PROSITE" id="PS00329">
    <property type="entry name" value="HSP70_2"/>
    <property type="match status" value="1"/>
</dbReference>
<dbReference type="PROSITE" id="PS01036">
    <property type="entry name" value="HSP70_3"/>
    <property type="match status" value="1"/>
</dbReference>
<evidence type="ECO:0000255" key="1">
    <source>
        <dbReference type="HAMAP-Rule" id="MF_00332"/>
    </source>
</evidence>
<evidence type="ECO:0000256" key="2">
    <source>
        <dbReference type="SAM" id="MobiDB-lite"/>
    </source>
</evidence>
<keyword id="KW-0067">ATP-binding</keyword>
<keyword id="KW-0143">Chaperone</keyword>
<keyword id="KW-0547">Nucleotide-binding</keyword>
<keyword id="KW-0597">Phosphoprotein</keyword>
<keyword id="KW-0346">Stress response</keyword>
<sequence>MGKIIGIDLGTTNSCVSILENGNVKVIENAEGARTTPSIIAYANDGEILVGQSAKRQAVTNPHNTLYAVKRLIGRRFDEEVVQKDIQMVPYKIVKADNNDAWVEVNGQKMAPPQISAEILKKMKKTAEDYLGEAVTEAVITVPAYFNDSQRQATKDAGRIAGLDVKRIINEPTAAALAYGMDKAKGDHTVIVYDLGGGTFDVSVIEIAEVDGEHQFEVLATNGDTFLGGEDFDIRLIDYLVDEFKKESGMNLKGDPLAMQRLKEAAEKAKIELSSSQQTDVNLPYITADATGPKHLNVKISRAKLESLVEDLVQRTIEPCRIALKDAGIDVGSINDVILVGGQTRMPLVQKTVTDFFGKEARKDVNPDEAVAMGAAIQGAVLAGDVKDVLLLDVSPLTLGIETMGGVMTALIEKNTTIPTKKSQVFSTADDNQGAVTIHVLQGERKQAAQNKSLGKFDLADIPPAPRGVPQIEVTFDIDANGILHVGAKDKATGKTQSIVIKANSGLSDEEIQQMIRDAEANSEEDRKFEELATARNQGDALVHSTRKMVADAGDKVTAEEKTAIEAAVVALEAAVKGDDKAAIDAKVEELSKVSAPVAQKMYAEQAQPAEGAAPHAESAEKADDVVDAEFEEVKDHK</sequence>
<organism>
    <name type="scientific">Pseudomonas fluorescens (strain ATCC BAA-477 / NRRL B-23932 / Pf-5)</name>
    <dbReference type="NCBI Taxonomy" id="220664"/>
    <lineage>
        <taxon>Bacteria</taxon>
        <taxon>Pseudomonadati</taxon>
        <taxon>Pseudomonadota</taxon>
        <taxon>Gammaproteobacteria</taxon>
        <taxon>Pseudomonadales</taxon>
        <taxon>Pseudomonadaceae</taxon>
        <taxon>Pseudomonas</taxon>
    </lineage>
</organism>
<name>DNAK_PSEF5</name>
<accession>Q4KIH1</accession>
<protein>
    <recommendedName>
        <fullName evidence="1">Chaperone protein DnaK</fullName>
    </recommendedName>
    <alternativeName>
        <fullName evidence="1">HSP70</fullName>
    </alternativeName>
    <alternativeName>
        <fullName evidence="1">Heat shock 70 kDa protein</fullName>
    </alternativeName>
    <alternativeName>
        <fullName evidence="1">Heat shock protein 70</fullName>
    </alternativeName>
</protein>
<reference key="1">
    <citation type="journal article" date="2005" name="Nat. Biotechnol.">
        <title>Complete genome sequence of the plant commensal Pseudomonas fluorescens Pf-5.</title>
        <authorList>
            <person name="Paulsen I.T."/>
            <person name="Press C.M."/>
            <person name="Ravel J."/>
            <person name="Kobayashi D.Y."/>
            <person name="Myers G.S.A."/>
            <person name="Mavrodi D.V."/>
            <person name="DeBoy R.T."/>
            <person name="Seshadri R."/>
            <person name="Ren Q."/>
            <person name="Madupu R."/>
            <person name="Dodson R.J."/>
            <person name="Durkin A.S."/>
            <person name="Brinkac L.M."/>
            <person name="Daugherty S.C."/>
            <person name="Sullivan S.A."/>
            <person name="Rosovitz M.J."/>
            <person name="Gwinn M.L."/>
            <person name="Zhou L."/>
            <person name="Schneider D.J."/>
            <person name="Cartinhour S.W."/>
            <person name="Nelson W.C."/>
            <person name="Weidman J."/>
            <person name="Watkins K."/>
            <person name="Tran K."/>
            <person name="Khouri H."/>
            <person name="Pierson E.A."/>
            <person name="Pierson L.S. III"/>
            <person name="Thomashow L.S."/>
            <person name="Loper J.E."/>
        </authorList>
    </citation>
    <scope>NUCLEOTIDE SEQUENCE [LARGE SCALE GENOMIC DNA]</scope>
    <source>
        <strain>ATCC BAA-477 / NRRL B-23932 / Pf-5</strain>
    </source>
</reference>
<proteinExistence type="inferred from homology"/>